<reference key="1">
    <citation type="journal article" date="2002" name="Nucleic Acids Res.">
        <title>Genome sequence of Shigella flexneri 2a: insights into pathogenicity through comparison with genomes of Escherichia coli K12 and O157.</title>
        <authorList>
            <person name="Jin Q."/>
            <person name="Yuan Z."/>
            <person name="Xu J."/>
            <person name="Wang Y."/>
            <person name="Shen Y."/>
            <person name="Lu W."/>
            <person name="Wang J."/>
            <person name="Liu H."/>
            <person name="Yang J."/>
            <person name="Yang F."/>
            <person name="Zhang X."/>
            <person name="Zhang J."/>
            <person name="Yang G."/>
            <person name="Wu H."/>
            <person name="Qu D."/>
            <person name="Dong J."/>
            <person name="Sun L."/>
            <person name="Xue Y."/>
            <person name="Zhao A."/>
            <person name="Gao Y."/>
            <person name="Zhu J."/>
            <person name="Kan B."/>
            <person name="Ding K."/>
            <person name="Chen S."/>
            <person name="Cheng H."/>
            <person name="Yao Z."/>
            <person name="He B."/>
            <person name="Chen R."/>
            <person name="Ma D."/>
            <person name="Qiang B."/>
            <person name="Wen Y."/>
            <person name="Hou Y."/>
            <person name="Yu J."/>
        </authorList>
    </citation>
    <scope>NUCLEOTIDE SEQUENCE [LARGE SCALE GENOMIC DNA]</scope>
    <source>
        <strain>301 / Serotype 2a</strain>
    </source>
</reference>
<reference key="2">
    <citation type="journal article" date="2003" name="Infect. Immun.">
        <title>Complete genome sequence and comparative genomics of Shigella flexneri serotype 2a strain 2457T.</title>
        <authorList>
            <person name="Wei J."/>
            <person name="Goldberg M.B."/>
            <person name="Burland V."/>
            <person name="Venkatesan M.M."/>
            <person name="Deng W."/>
            <person name="Fournier G."/>
            <person name="Mayhew G.F."/>
            <person name="Plunkett G. III"/>
            <person name="Rose D.J."/>
            <person name="Darling A."/>
            <person name="Mau B."/>
            <person name="Perna N.T."/>
            <person name="Payne S.M."/>
            <person name="Runyen-Janecky L.J."/>
            <person name="Zhou S."/>
            <person name="Schwartz D.C."/>
            <person name="Blattner F.R."/>
        </authorList>
    </citation>
    <scope>NUCLEOTIDE SEQUENCE [LARGE SCALE GENOMIC DNA]</scope>
    <source>
        <strain>ATCC 700930 / 2457T / Serotype 2a</strain>
    </source>
</reference>
<evidence type="ECO:0000250" key="1">
    <source>
        <dbReference type="UniProtKB" id="P0A948"/>
    </source>
</evidence>
<evidence type="ECO:0000255" key="2">
    <source>
        <dbReference type="PROSITE-ProRule" id="PRU00532"/>
    </source>
</evidence>
<evidence type="ECO:0000305" key="3"/>
<protein>
    <recommendedName>
        <fullName evidence="1">[Ribosomal protein uS5]-alanine N-acetyltransferase</fullName>
        <ecNumber evidence="1">2.3.1.267</ecNumber>
    </recommendedName>
</protein>
<gene>
    <name type="primary">rimJ</name>
    <name type="ordered locus">SF1072</name>
    <name type="ordered locus">S1150</name>
</gene>
<organism>
    <name type="scientific">Shigella flexneri</name>
    <dbReference type="NCBI Taxonomy" id="623"/>
    <lineage>
        <taxon>Bacteria</taxon>
        <taxon>Pseudomonadati</taxon>
        <taxon>Pseudomonadota</taxon>
        <taxon>Gammaproteobacteria</taxon>
        <taxon>Enterobacterales</taxon>
        <taxon>Enterobacteriaceae</taxon>
        <taxon>Shigella</taxon>
    </lineage>
</organism>
<feature type="chain" id="PRO_0000074569" description="[Ribosomal protein uS5]-alanine N-acetyltransferase">
    <location>
        <begin position="1"/>
        <end position="194"/>
    </location>
</feature>
<feature type="domain" description="N-acetyltransferase" evidence="2">
    <location>
        <begin position="18"/>
        <end position="188"/>
    </location>
</feature>
<name>RIMJ_SHIFL</name>
<dbReference type="EC" id="2.3.1.267" evidence="1"/>
<dbReference type="EMBL" id="AE005674">
    <property type="protein sequence ID" value="AAN42694.1"/>
    <property type="molecule type" value="Genomic_DNA"/>
</dbReference>
<dbReference type="EMBL" id="AE014073">
    <property type="protein sequence ID" value="AAP16581.1"/>
    <property type="molecule type" value="Genomic_DNA"/>
</dbReference>
<dbReference type="RefSeq" id="NP_706987.1">
    <property type="nucleotide sequence ID" value="NC_004337.2"/>
</dbReference>
<dbReference type="RefSeq" id="WP_000468186.1">
    <property type="nucleotide sequence ID" value="NZ_WPGW01000001.1"/>
</dbReference>
<dbReference type="SMR" id="P0A950"/>
<dbReference type="STRING" id="198214.SF1072"/>
<dbReference type="PaxDb" id="198214-SF1072"/>
<dbReference type="GeneID" id="1024014"/>
<dbReference type="GeneID" id="93776341"/>
<dbReference type="KEGG" id="sfl:SF1072"/>
<dbReference type="KEGG" id="sfx:S1150"/>
<dbReference type="PATRIC" id="fig|198214.7.peg.1255"/>
<dbReference type="HOGENOM" id="CLU_013985_40_1_6"/>
<dbReference type="Proteomes" id="UP000001006">
    <property type="component" value="Chromosome"/>
</dbReference>
<dbReference type="Proteomes" id="UP000002673">
    <property type="component" value="Chromosome"/>
</dbReference>
<dbReference type="GO" id="GO:0005737">
    <property type="term" value="C:cytoplasm"/>
    <property type="evidence" value="ECO:0007669"/>
    <property type="project" value="UniProtKB-SubCell"/>
</dbReference>
<dbReference type="GO" id="GO:0008999">
    <property type="term" value="F:protein-N-terminal-alanine acetyltransferase activity"/>
    <property type="evidence" value="ECO:0007669"/>
    <property type="project" value="UniProtKB-EC"/>
</dbReference>
<dbReference type="FunFam" id="3.40.630.30:FF:000005">
    <property type="entry name" value="Ribosomal protein alanine acetyltransferase"/>
    <property type="match status" value="1"/>
</dbReference>
<dbReference type="Gene3D" id="3.40.630.30">
    <property type="match status" value="1"/>
</dbReference>
<dbReference type="InterPro" id="IPR016181">
    <property type="entry name" value="Acyl_CoA_acyltransferase"/>
</dbReference>
<dbReference type="InterPro" id="IPR000182">
    <property type="entry name" value="GNAT_dom"/>
</dbReference>
<dbReference type="InterPro" id="IPR051531">
    <property type="entry name" value="N-acetyltransferase"/>
</dbReference>
<dbReference type="NCBIfam" id="NF008072">
    <property type="entry name" value="PRK10809.1"/>
    <property type="match status" value="1"/>
</dbReference>
<dbReference type="PANTHER" id="PTHR43792:SF8">
    <property type="entry name" value="[RIBOSOMAL PROTEIN US5]-ALANINE N-ACETYLTRANSFERASE"/>
    <property type="match status" value="1"/>
</dbReference>
<dbReference type="PANTHER" id="PTHR43792">
    <property type="entry name" value="GNAT FAMILY, PUTATIVE (AFU_ORTHOLOGUE AFUA_3G00765)-RELATED-RELATED"/>
    <property type="match status" value="1"/>
</dbReference>
<dbReference type="Pfam" id="PF13302">
    <property type="entry name" value="Acetyltransf_3"/>
    <property type="match status" value="1"/>
</dbReference>
<dbReference type="SUPFAM" id="SSF55729">
    <property type="entry name" value="Acyl-CoA N-acyltransferases (Nat)"/>
    <property type="match status" value="1"/>
</dbReference>
<dbReference type="PROSITE" id="PS51186">
    <property type="entry name" value="GNAT"/>
    <property type="match status" value="1"/>
</dbReference>
<proteinExistence type="inferred from homology"/>
<comment type="function">
    <text evidence="1">Acetylates the N-terminal alanine of ribosomal protein uS5.</text>
</comment>
<comment type="catalytic activity">
    <reaction evidence="1">
        <text>N-terminal L-alanyl-[ribosomal protein uS5] + acetyl-CoA = N-terminal N(alpha)-acetyl-L-alanyl-[ribosomal protein uS5] + CoA + H(+)</text>
        <dbReference type="Rhea" id="RHEA:43752"/>
        <dbReference type="Rhea" id="RHEA-COMP:10672"/>
        <dbReference type="Rhea" id="RHEA-COMP:10673"/>
        <dbReference type="ChEBI" id="CHEBI:15378"/>
        <dbReference type="ChEBI" id="CHEBI:57287"/>
        <dbReference type="ChEBI" id="CHEBI:57288"/>
        <dbReference type="ChEBI" id="CHEBI:64718"/>
        <dbReference type="ChEBI" id="CHEBI:83683"/>
        <dbReference type="EC" id="2.3.1.267"/>
    </reaction>
</comment>
<comment type="subcellular location">
    <subcellularLocation>
        <location evidence="1">Cytoplasm</location>
    </subcellularLocation>
</comment>
<comment type="similarity">
    <text evidence="3">Belongs to the acetyltransferase family. RimJ subfamily.</text>
</comment>
<accession>P0A950</accession>
<accession>P09454</accession>
<sequence length="194" mass="22688">MFGYRSNVPKVRLTTDRLVVRLVHDRDAWRLADYYAENRHFLKPWEPVRDESHCYPSGWQARLGMINEFHKQGSAFYFGLFDPDEKEIIGVANFSNVVRGSFHACYLGYSIGQKWQGKGLMFEALTAAIRYMQRTQHIHRIMANYMPHNKRSGDLLARLGFEKEGYAKDYLLIDGQWRDHVLTALTTPDWTPGR</sequence>
<keyword id="KW-0012">Acyltransferase</keyword>
<keyword id="KW-0963">Cytoplasm</keyword>
<keyword id="KW-1185">Reference proteome</keyword>
<keyword id="KW-0808">Transferase</keyword>